<accession>Q3Z4F6</accession>
<feature type="chain" id="PRO_0000260610" description="Ribosomal RNA large subunit methyltransferase H">
    <location>
        <begin position="1"/>
        <end position="155"/>
    </location>
</feature>
<feature type="binding site" evidence="1">
    <location>
        <position position="72"/>
    </location>
    <ligand>
        <name>S-adenosyl-L-methionine</name>
        <dbReference type="ChEBI" id="CHEBI:59789"/>
    </ligand>
</feature>
<feature type="binding site" evidence="1">
    <location>
        <position position="103"/>
    </location>
    <ligand>
        <name>S-adenosyl-L-methionine</name>
        <dbReference type="ChEBI" id="CHEBI:59789"/>
    </ligand>
</feature>
<feature type="binding site" evidence="1">
    <location>
        <begin position="122"/>
        <end position="127"/>
    </location>
    <ligand>
        <name>S-adenosyl-L-methionine</name>
        <dbReference type="ChEBI" id="CHEBI:59789"/>
    </ligand>
</feature>
<gene>
    <name evidence="1" type="primary">rlmH</name>
    <name type="ordered locus">SSON_0590</name>
</gene>
<reference key="1">
    <citation type="journal article" date="2005" name="Nucleic Acids Res.">
        <title>Genome dynamics and diversity of Shigella species, the etiologic agents of bacillary dysentery.</title>
        <authorList>
            <person name="Yang F."/>
            <person name="Yang J."/>
            <person name="Zhang X."/>
            <person name="Chen L."/>
            <person name="Jiang Y."/>
            <person name="Yan Y."/>
            <person name="Tang X."/>
            <person name="Wang J."/>
            <person name="Xiong Z."/>
            <person name="Dong J."/>
            <person name="Xue Y."/>
            <person name="Zhu Y."/>
            <person name="Xu X."/>
            <person name="Sun L."/>
            <person name="Chen S."/>
            <person name="Nie H."/>
            <person name="Peng J."/>
            <person name="Xu J."/>
            <person name="Wang Y."/>
            <person name="Yuan Z."/>
            <person name="Wen Y."/>
            <person name="Yao Z."/>
            <person name="Shen Y."/>
            <person name="Qiang B."/>
            <person name="Hou Y."/>
            <person name="Yu J."/>
            <person name="Jin Q."/>
        </authorList>
    </citation>
    <scope>NUCLEOTIDE SEQUENCE [LARGE SCALE GENOMIC DNA]</scope>
    <source>
        <strain>Ss046</strain>
    </source>
</reference>
<sequence length="155" mass="17341">MKLQLVAVGTKMPDWVQTGFTEYLRRFPKDMPFELIEIPAGKRGKNADIKRILDKEGEQMLAAAGKNRIVTLDIPGKPWDTPQLAAELERWKLDGRDVSLLIGGPEGLSPACKAAAEQSWSLSALTLPHPLVRVLVAESLYRAWSITTNHPYHRE</sequence>
<keyword id="KW-0963">Cytoplasm</keyword>
<keyword id="KW-0489">Methyltransferase</keyword>
<keyword id="KW-1185">Reference proteome</keyword>
<keyword id="KW-0698">rRNA processing</keyword>
<keyword id="KW-0949">S-adenosyl-L-methionine</keyword>
<keyword id="KW-0808">Transferase</keyword>
<comment type="function">
    <text evidence="1">Specifically methylates the pseudouridine at position 1915 (m3Psi1915) in 23S rRNA.</text>
</comment>
<comment type="catalytic activity">
    <reaction evidence="1">
        <text>pseudouridine(1915) in 23S rRNA + S-adenosyl-L-methionine = N(3)-methylpseudouridine(1915) in 23S rRNA + S-adenosyl-L-homocysteine + H(+)</text>
        <dbReference type="Rhea" id="RHEA:42752"/>
        <dbReference type="Rhea" id="RHEA-COMP:10221"/>
        <dbReference type="Rhea" id="RHEA-COMP:10222"/>
        <dbReference type="ChEBI" id="CHEBI:15378"/>
        <dbReference type="ChEBI" id="CHEBI:57856"/>
        <dbReference type="ChEBI" id="CHEBI:59789"/>
        <dbReference type="ChEBI" id="CHEBI:65314"/>
        <dbReference type="ChEBI" id="CHEBI:74486"/>
        <dbReference type="EC" id="2.1.1.177"/>
    </reaction>
</comment>
<comment type="subunit">
    <text evidence="1">Homodimer.</text>
</comment>
<comment type="subcellular location">
    <subcellularLocation>
        <location evidence="1">Cytoplasm</location>
    </subcellularLocation>
</comment>
<comment type="similarity">
    <text evidence="1">Belongs to the RNA methyltransferase RlmH family.</text>
</comment>
<organism>
    <name type="scientific">Shigella sonnei (strain Ss046)</name>
    <dbReference type="NCBI Taxonomy" id="300269"/>
    <lineage>
        <taxon>Bacteria</taxon>
        <taxon>Pseudomonadati</taxon>
        <taxon>Pseudomonadota</taxon>
        <taxon>Gammaproteobacteria</taxon>
        <taxon>Enterobacterales</taxon>
        <taxon>Enterobacteriaceae</taxon>
        <taxon>Shigella</taxon>
    </lineage>
</organism>
<protein>
    <recommendedName>
        <fullName evidence="1">Ribosomal RNA large subunit methyltransferase H</fullName>
        <ecNumber evidence="1">2.1.1.177</ecNumber>
    </recommendedName>
    <alternativeName>
        <fullName evidence="1">23S rRNA (pseudouridine1915-N3)-methyltransferase</fullName>
    </alternativeName>
    <alternativeName>
        <fullName evidence="1">23S rRNA m3Psi1915 methyltransferase</fullName>
    </alternativeName>
    <alternativeName>
        <fullName evidence="1">rRNA (pseudouridine-N3-)-methyltransferase RlmH</fullName>
    </alternativeName>
</protein>
<proteinExistence type="inferred from homology"/>
<evidence type="ECO:0000255" key="1">
    <source>
        <dbReference type="HAMAP-Rule" id="MF_00658"/>
    </source>
</evidence>
<dbReference type="EC" id="2.1.1.177" evidence="1"/>
<dbReference type="EMBL" id="CP000038">
    <property type="protein sequence ID" value="AAZ87356.1"/>
    <property type="molecule type" value="Genomic_DNA"/>
</dbReference>
<dbReference type="RefSeq" id="WP_000776104.1">
    <property type="nucleotide sequence ID" value="NC_007384.1"/>
</dbReference>
<dbReference type="SMR" id="Q3Z4F6"/>
<dbReference type="GeneID" id="93776846"/>
<dbReference type="KEGG" id="ssn:SSON_0590"/>
<dbReference type="HOGENOM" id="CLU_100552_1_0_6"/>
<dbReference type="Proteomes" id="UP000002529">
    <property type="component" value="Chromosome"/>
</dbReference>
<dbReference type="GO" id="GO:0005737">
    <property type="term" value="C:cytoplasm"/>
    <property type="evidence" value="ECO:0007669"/>
    <property type="project" value="UniProtKB-SubCell"/>
</dbReference>
<dbReference type="GO" id="GO:0070038">
    <property type="term" value="F:rRNA (pseudouridine-N3-)-methyltransferase activity"/>
    <property type="evidence" value="ECO:0007669"/>
    <property type="project" value="UniProtKB-UniRule"/>
</dbReference>
<dbReference type="CDD" id="cd18081">
    <property type="entry name" value="RlmH-like"/>
    <property type="match status" value="1"/>
</dbReference>
<dbReference type="FunFam" id="3.40.1280.10:FF:000004">
    <property type="entry name" value="Ribosomal RNA large subunit methyltransferase H"/>
    <property type="match status" value="1"/>
</dbReference>
<dbReference type="Gene3D" id="3.40.1280.10">
    <property type="match status" value="1"/>
</dbReference>
<dbReference type="HAMAP" id="MF_00658">
    <property type="entry name" value="23SrRNA_methyltr_H"/>
    <property type="match status" value="1"/>
</dbReference>
<dbReference type="InterPro" id="IPR029028">
    <property type="entry name" value="Alpha/beta_knot_MTases"/>
</dbReference>
<dbReference type="InterPro" id="IPR003742">
    <property type="entry name" value="RlmH-like"/>
</dbReference>
<dbReference type="InterPro" id="IPR029026">
    <property type="entry name" value="tRNA_m1G_MTases_N"/>
</dbReference>
<dbReference type="NCBIfam" id="NF000984">
    <property type="entry name" value="PRK00103.1-1"/>
    <property type="match status" value="1"/>
</dbReference>
<dbReference type="NCBIfam" id="NF000986">
    <property type="entry name" value="PRK00103.1-4"/>
    <property type="match status" value="1"/>
</dbReference>
<dbReference type="NCBIfam" id="TIGR00246">
    <property type="entry name" value="tRNA_RlmH_YbeA"/>
    <property type="match status" value="1"/>
</dbReference>
<dbReference type="PANTHER" id="PTHR33603">
    <property type="entry name" value="METHYLTRANSFERASE"/>
    <property type="match status" value="1"/>
</dbReference>
<dbReference type="PANTHER" id="PTHR33603:SF1">
    <property type="entry name" value="RIBOSOMAL RNA LARGE SUBUNIT METHYLTRANSFERASE H"/>
    <property type="match status" value="1"/>
</dbReference>
<dbReference type="Pfam" id="PF02590">
    <property type="entry name" value="SPOUT_MTase"/>
    <property type="match status" value="1"/>
</dbReference>
<dbReference type="PIRSF" id="PIRSF004505">
    <property type="entry name" value="MT_bac"/>
    <property type="match status" value="1"/>
</dbReference>
<dbReference type="SUPFAM" id="SSF75217">
    <property type="entry name" value="alpha/beta knot"/>
    <property type="match status" value="1"/>
</dbReference>
<name>RLMH_SHISS</name>